<accession>P60533</accession>
<accession>O86017</accession>
<dbReference type="EMBL" id="AF071829">
    <property type="protein sequence ID" value="AAD23277.1"/>
    <property type="molecule type" value="Genomic_DNA"/>
</dbReference>
<dbReference type="EMBL" id="AE016958">
    <property type="protein sequence ID" value="AAS06814.1"/>
    <property type="molecule type" value="Genomic_DNA"/>
</dbReference>
<dbReference type="RefSeq" id="WP_003873391.1">
    <property type="nucleotide sequence ID" value="NZ_CP106873.1"/>
</dbReference>
<dbReference type="SMR" id="P60533"/>
<dbReference type="STRING" id="262316.MAP_4264"/>
<dbReference type="GeneID" id="75271880"/>
<dbReference type="KEGG" id="mpa:MAP_4264"/>
<dbReference type="eggNOG" id="COG0234">
    <property type="taxonomic scope" value="Bacteria"/>
</dbReference>
<dbReference type="HOGENOM" id="CLU_132825_2_0_11"/>
<dbReference type="Proteomes" id="UP000000580">
    <property type="component" value="Chromosome"/>
</dbReference>
<dbReference type="GO" id="GO:0005737">
    <property type="term" value="C:cytoplasm"/>
    <property type="evidence" value="ECO:0007669"/>
    <property type="project" value="UniProtKB-SubCell"/>
</dbReference>
<dbReference type="GO" id="GO:0005524">
    <property type="term" value="F:ATP binding"/>
    <property type="evidence" value="ECO:0007669"/>
    <property type="project" value="InterPro"/>
</dbReference>
<dbReference type="GO" id="GO:0046872">
    <property type="term" value="F:metal ion binding"/>
    <property type="evidence" value="ECO:0007669"/>
    <property type="project" value="TreeGrafter"/>
</dbReference>
<dbReference type="GO" id="GO:0044183">
    <property type="term" value="F:protein folding chaperone"/>
    <property type="evidence" value="ECO:0007669"/>
    <property type="project" value="InterPro"/>
</dbReference>
<dbReference type="GO" id="GO:0051087">
    <property type="term" value="F:protein-folding chaperone binding"/>
    <property type="evidence" value="ECO:0007669"/>
    <property type="project" value="TreeGrafter"/>
</dbReference>
<dbReference type="GO" id="GO:0051082">
    <property type="term" value="F:unfolded protein binding"/>
    <property type="evidence" value="ECO:0007669"/>
    <property type="project" value="TreeGrafter"/>
</dbReference>
<dbReference type="GO" id="GO:0051085">
    <property type="term" value="P:chaperone cofactor-dependent protein refolding"/>
    <property type="evidence" value="ECO:0007669"/>
    <property type="project" value="TreeGrafter"/>
</dbReference>
<dbReference type="CDD" id="cd00320">
    <property type="entry name" value="cpn10"/>
    <property type="match status" value="1"/>
</dbReference>
<dbReference type="FunFam" id="2.30.33.40:FF:000001">
    <property type="entry name" value="10 kDa chaperonin"/>
    <property type="match status" value="1"/>
</dbReference>
<dbReference type="Gene3D" id="2.30.33.40">
    <property type="entry name" value="GroES chaperonin"/>
    <property type="match status" value="1"/>
</dbReference>
<dbReference type="HAMAP" id="MF_00580">
    <property type="entry name" value="CH10"/>
    <property type="match status" value="1"/>
</dbReference>
<dbReference type="InterPro" id="IPR020818">
    <property type="entry name" value="Chaperonin_GroES"/>
</dbReference>
<dbReference type="InterPro" id="IPR037124">
    <property type="entry name" value="Chaperonin_GroES_sf"/>
</dbReference>
<dbReference type="InterPro" id="IPR018369">
    <property type="entry name" value="Chaprnonin_Cpn10_CS"/>
</dbReference>
<dbReference type="InterPro" id="IPR011032">
    <property type="entry name" value="GroES-like_sf"/>
</dbReference>
<dbReference type="NCBIfam" id="NF001530">
    <property type="entry name" value="PRK00364.1-6"/>
    <property type="match status" value="1"/>
</dbReference>
<dbReference type="NCBIfam" id="NF001531">
    <property type="entry name" value="PRK00364.2-2"/>
    <property type="match status" value="1"/>
</dbReference>
<dbReference type="NCBIfam" id="NF001533">
    <property type="entry name" value="PRK00364.2-4"/>
    <property type="match status" value="1"/>
</dbReference>
<dbReference type="NCBIfam" id="NF001534">
    <property type="entry name" value="PRK00364.2-5"/>
    <property type="match status" value="1"/>
</dbReference>
<dbReference type="PANTHER" id="PTHR10772">
    <property type="entry name" value="10 KDA HEAT SHOCK PROTEIN"/>
    <property type="match status" value="1"/>
</dbReference>
<dbReference type="PANTHER" id="PTHR10772:SF58">
    <property type="entry name" value="CO-CHAPERONIN GROES"/>
    <property type="match status" value="1"/>
</dbReference>
<dbReference type="Pfam" id="PF00166">
    <property type="entry name" value="Cpn10"/>
    <property type="match status" value="1"/>
</dbReference>
<dbReference type="PRINTS" id="PR00297">
    <property type="entry name" value="CHAPERONIN10"/>
</dbReference>
<dbReference type="SMART" id="SM00883">
    <property type="entry name" value="Cpn10"/>
    <property type="match status" value="1"/>
</dbReference>
<dbReference type="SUPFAM" id="SSF50129">
    <property type="entry name" value="GroES-like"/>
    <property type="match status" value="1"/>
</dbReference>
<dbReference type="PROSITE" id="PS00681">
    <property type="entry name" value="CHAPERONINS_CPN10"/>
    <property type="match status" value="1"/>
</dbReference>
<gene>
    <name evidence="2" type="primary">groES</name>
    <name evidence="2" type="synonym">groS</name>
    <name type="synonym">mopB</name>
    <name type="ordered locus">MAP_4264</name>
</gene>
<keyword id="KW-0143">Chaperone</keyword>
<keyword id="KW-0963">Cytoplasm</keyword>
<keyword id="KW-1185">Reference proteome</keyword>
<keyword id="KW-0346">Stress response</keyword>
<comment type="function">
    <text evidence="2">Together with the chaperonin GroEL, plays an essential role in assisting protein folding. The GroEL-GroES system forms a nano-cage that allows encapsulation of the non-native substrate proteins and provides a physical environment optimized to promote and accelerate protein folding. GroES binds to the apical surface of the GroEL ring, thereby capping the opening of the GroEL channel.</text>
</comment>
<comment type="subunit">
    <text evidence="2">Heptamer of 7 subunits arranged in a ring. Interacts with the chaperonin GroEL.</text>
</comment>
<comment type="subcellular location">
    <subcellularLocation>
        <location evidence="2">Cytoplasm</location>
    </subcellularLocation>
</comment>
<comment type="similarity">
    <text evidence="2 3">Belongs to the GroES chaperonin family.</text>
</comment>
<protein>
    <recommendedName>
        <fullName evidence="2">Co-chaperonin GroES</fullName>
    </recommendedName>
    <alternativeName>
        <fullName>10 kDa antigen</fullName>
    </alternativeName>
    <alternativeName>
        <fullName evidence="2">10 kDa chaperonin</fullName>
    </alternativeName>
    <alternativeName>
        <fullName evidence="2">Chaperonin-10</fullName>
        <shortName evidence="2">Cpn10</shortName>
    </alternativeName>
</protein>
<evidence type="ECO:0000250" key="1"/>
<evidence type="ECO:0000255" key="2">
    <source>
        <dbReference type="HAMAP-Rule" id="MF_00580"/>
    </source>
</evidence>
<evidence type="ECO:0000305" key="3"/>
<feature type="initiator methionine" description="Removed" evidence="1">
    <location>
        <position position="1"/>
    </location>
</feature>
<feature type="chain" id="PRO_0000174787" description="Co-chaperonin GroES">
    <location>
        <begin position="2"/>
        <end position="100"/>
    </location>
</feature>
<proteinExistence type="inferred from homology"/>
<reference key="1">
    <citation type="journal article" date="1999" name="Vet. Microbiol.">
        <title>The GroES antigens of Mycobacterium avium and Mycobacterium paratuberculosis.</title>
        <authorList>
            <person name="Cobb A.J."/>
            <person name="Frothingham R."/>
        </authorList>
    </citation>
    <scope>NUCLEOTIDE SEQUENCE [GENOMIC DNA]</scope>
    <source>
        <strain>ATCC 19698 / CIP 103963 / DSM 44133 / TMC 807</strain>
    </source>
</reference>
<reference key="2">
    <citation type="journal article" date="2005" name="Proc. Natl. Acad. Sci. U.S.A.">
        <title>The complete genome sequence of Mycobacterium avium subspecies paratuberculosis.</title>
        <authorList>
            <person name="Li L."/>
            <person name="Bannantine J.P."/>
            <person name="Zhang Q."/>
            <person name="Amonsin A."/>
            <person name="May B.J."/>
            <person name="Alt D."/>
            <person name="Banerji N."/>
            <person name="Kanjilal S."/>
            <person name="Kapur V."/>
        </authorList>
    </citation>
    <scope>NUCLEOTIDE SEQUENCE [LARGE SCALE GENOMIC DNA]</scope>
    <source>
        <strain>ATCC BAA-968 / K-10</strain>
    </source>
</reference>
<organism>
    <name type="scientific">Mycolicibacterium paratuberculosis (strain ATCC BAA-968 / K-10)</name>
    <name type="common">Mycobacterium paratuberculosis</name>
    <dbReference type="NCBI Taxonomy" id="262316"/>
    <lineage>
        <taxon>Bacteria</taxon>
        <taxon>Bacillati</taxon>
        <taxon>Actinomycetota</taxon>
        <taxon>Actinomycetes</taxon>
        <taxon>Mycobacteriales</taxon>
        <taxon>Mycobacteriaceae</taxon>
        <taxon>Mycobacterium</taxon>
        <taxon>Mycobacterium avium complex (MAC)</taxon>
    </lineage>
</organism>
<sequence length="100" mass="10748">MAKVNIKPLEDKILVQANEAETTTASGLVIPDTAKEKPQEGTVVAVGPGRWDDDGAKRIPLDVSEGDTVIYSKYGGTEIKYNGEEYLILSARDVLAVVSK</sequence>
<name>CH10_MYCPA</name>